<gene>
    <name type="primary">p17</name>
    <name evidence="4" type="synonym">sctA</name>
    <name type="ORF">DDB_G0278725</name>
</gene>
<protein>
    <recommendedName>
        <fullName evidence="4">Secreted protein A</fullName>
    </recommendedName>
    <alternativeName>
        <fullName evidence="5">Protein gp17</fullName>
    </alternativeName>
</protein>
<feature type="signal peptide" evidence="1">
    <location>
        <begin position="1"/>
        <end position="19"/>
    </location>
</feature>
<feature type="chain" id="PRO_5000147294" description="Secreted protein A">
    <location>
        <begin position="20"/>
        <end position="174"/>
    </location>
</feature>
<feature type="glycosylation site" description="N-linked (GlcNAc...) asparagine" evidence="1">
    <location>
        <position position="156"/>
    </location>
</feature>
<evidence type="ECO:0000255" key="1"/>
<evidence type="ECO:0000269" key="2">
    <source>
    </source>
</evidence>
<evidence type="ECO:0000269" key="3">
    <source>
    </source>
</evidence>
<evidence type="ECO:0000303" key="4">
    <source>
    </source>
</evidence>
<evidence type="ECO:0000305" key="5"/>
<evidence type="ECO:0000305" key="6">
    <source>
    </source>
</evidence>
<name>SCTA_DICDI</name>
<keyword id="KW-1015">Disulfide bond</keyword>
<keyword id="KW-0325">Glycoprotein</keyword>
<keyword id="KW-1185">Reference proteome</keyword>
<keyword id="KW-0964">Secreted</keyword>
<keyword id="KW-0732">Signal</keyword>
<organism>
    <name type="scientific">Dictyostelium discoideum</name>
    <name type="common">Social amoeba</name>
    <dbReference type="NCBI Taxonomy" id="44689"/>
    <lineage>
        <taxon>Eukaryota</taxon>
        <taxon>Amoebozoa</taxon>
        <taxon>Evosea</taxon>
        <taxon>Eumycetozoa</taxon>
        <taxon>Dictyostelia</taxon>
        <taxon>Dictyosteliales</taxon>
        <taxon>Dictyosteliaceae</taxon>
        <taxon>Dictyostelium</taxon>
    </lineage>
</organism>
<reference key="1">
    <citation type="submission" date="1998-10" db="EMBL/GenBank/DDBJ databases">
        <title>Characterization of Dictyostelium discoideum secreted vesicles accumulating a 17 kDa protein.</title>
        <authorList>
            <person name="Ryckewaert J.J."/>
            <person name="Louwagie M."/>
            <person name="Journet A.M."/>
            <person name="Paintrand I."/>
            <person name="Satre M."/>
            <person name="Garin J."/>
        </authorList>
    </citation>
    <scope>NUCLEOTIDE SEQUENCE [MRNA]</scope>
    <source>
        <strain>AX2</strain>
    </source>
</reference>
<reference key="2">
    <citation type="journal article" date="2005" name="Nature">
        <title>The genome of the social amoeba Dictyostelium discoideum.</title>
        <authorList>
            <person name="Eichinger L."/>
            <person name="Pachebat J.A."/>
            <person name="Gloeckner G."/>
            <person name="Rajandream M.A."/>
            <person name="Sucgang R."/>
            <person name="Berriman M."/>
            <person name="Song J."/>
            <person name="Olsen R."/>
            <person name="Szafranski K."/>
            <person name="Xu Q."/>
            <person name="Tunggal B."/>
            <person name="Kummerfeld S."/>
            <person name="Madera M."/>
            <person name="Konfortov B.A."/>
            <person name="Rivero F."/>
            <person name="Bankier A.T."/>
            <person name="Lehmann R."/>
            <person name="Hamlin N."/>
            <person name="Davies R."/>
            <person name="Gaudet P."/>
            <person name="Fey P."/>
            <person name="Pilcher K."/>
            <person name="Chen G."/>
            <person name="Saunders D."/>
            <person name="Sodergren E.J."/>
            <person name="Davis P."/>
            <person name="Kerhornou A."/>
            <person name="Nie X."/>
            <person name="Hall N."/>
            <person name="Anjard C."/>
            <person name="Hemphill L."/>
            <person name="Bason N."/>
            <person name="Farbrother P."/>
            <person name="Desany B."/>
            <person name="Just E."/>
            <person name="Morio T."/>
            <person name="Rost R."/>
            <person name="Churcher C.M."/>
            <person name="Cooper J."/>
            <person name="Haydock S."/>
            <person name="van Driessche N."/>
            <person name="Cronin A."/>
            <person name="Goodhead I."/>
            <person name="Muzny D.M."/>
            <person name="Mourier T."/>
            <person name="Pain A."/>
            <person name="Lu M."/>
            <person name="Harper D."/>
            <person name="Lindsay R."/>
            <person name="Hauser H."/>
            <person name="James K.D."/>
            <person name="Quiles M."/>
            <person name="Madan Babu M."/>
            <person name="Saito T."/>
            <person name="Buchrieser C."/>
            <person name="Wardroper A."/>
            <person name="Felder M."/>
            <person name="Thangavelu M."/>
            <person name="Johnson D."/>
            <person name="Knights A."/>
            <person name="Loulseged H."/>
            <person name="Mungall K.L."/>
            <person name="Oliver K."/>
            <person name="Price C."/>
            <person name="Quail M.A."/>
            <person name="Urushihara H."/>
            <person name="Hernandez J."/>
            <person name="Rabbinowitsch E."/>
            <person name="Steffen D."/>
            <person name="Sanders M."/>
            <person name="Ma J."/>
            <person name="Kohara Y."/>
            <person name="Sharp S."/>
            <person name="Simmonds M.N."/>
            <person name="Spiegler S."/>
            <person name="Tivey A."/>
            <person name="Sugano S."/>
            <person name="White B."/>
            <person name="Walker D."/>
            <person name="Woodward J.R."/>
            <person name="Winckler T."/>
            <person name="Tanaka Y."/>
            <person name="Shaulsky G."/>
            <person name="Schleicher M."/>
            <person name="Weinstock G.M."/>
            <person name="Rosenthal A."/>
            <person name="Cox E.C."/>
            <person name="Chisholm R.L."/>
            <person name="Gibbs R.A."/>
            <person name="Loomis W.F."/>
            <person name="Platzer M."/>
            <person name="Kay R.R."/>
            <person name="Williams J.G."/>
            <person name="Dear P.H."/>
            <person name="Noegel A.A."/>
            <person name="Barrell B.G."/>
            <person name="Kuspa A."/>
        </authorList>
    </citation>
    <scope>NUCLEOTIDE SEQUENCE [LARGE SCALE GENOMIC DNA]</scope>
    <source>
        <strain>AX4</strain>
    </source>
</reference>
<reference key="3">
    <citation type="journal article" date="2016" name="PLoS ONE">
        <title>Pycnosomes: condensed endosomal structures secreted by Dictyostelium amoebae.</title>
        <authorList>
            <person name="Sabra A."/>
            <person name="Leiba J."/>
            <person name="Mas L."/>
            <person name="Louwagie M."/>
            <person name="Coute Y."/>
            <person name="Journet A."/>
            <person name="Cosson P."/>
            <person name="Aubry L."/>
        </authorList>
    </citation>
    <scope>SUBCELLULAR LOCATION</scope>
    <scope>DISULFIDE BOND</scope>
</reference>
<reference key="4">
    <citation type="journal article" date="2016" name="PLoS ONE">
        <title>Identification of proteins associated with multilamellar bodies produced by Dictyostelium discoideum.</title>
        <authorList>
            <person name="Denoncourt A.M."/>
            <person name="Paquet V.E."/>
            <person name="Sedighi A."/>
            <person name="Charette S.J."/>
        </authorList>
    </citation>
    <scope>SUBCELLULAR LOCATION</scope>
</reference>
<sequence>MRLLITLFAIFALFNCSLANTATNVGEFLIGFAQGVEITLNSNSQACLSGVTSTFDEFQTAFQLIDSGFKSKSINQVKTGITDLGLAIQQVPVDYDACGITQFVEEIEEIASKLSSGVDGIVDVILKEAVEIWEHKNDLSADFKTAIADWKSSNYNGSGVAVGSIIGDLIQGAK</sequence>
<proteinExistence type="evidence at protein level"/>
<accession>O77257</accession>
<accession>Q54XL2</accession>
<comment type="subcellular location">
    <subcellularLocation>
        <location evidence="2 3">Secreted</location>
    </subcellularLocation>
    <subcellularLocation>
        <location evidence="2">Extracellular vesicle</location>
    </subcellularLocation>
    <text evidence="2 3">Most abundant protein present in secreted pycnosomes, which consist of membranous materials that are continuously secreted (PubMed:27187592). Also found in multilamellar bodies, which consist of structures of lysosomal origin composed of multiple concentric membrane layers (PubMed:27340834).</text>
</comment>
<comment type="PTM">
    <text evidence="6">Probably contains disulfide bonds.</text>
</comment>
<comment type="similarity">
    <text evidence="5">Belongs to the Sct family.</text>
</comment>
<dbReference type="EMBL" id="Y17042">
    <property type="protein sequence ID" value="CAA76600.1"/>
    <property type="molecule type" value="mRNA"/>
</dbReference>
<dbReference type="EMBL" id="AAFI02000024">
    <property type="protein sequence ID" value="EAL67964.1"/>
    <property type="molecule type" value="Genomic_DNA"/>
</dbReference>
<dbReference type="RefSeq" id="XP_647791.1">
    <property type="nucleotide sequence ID" value="XM_642699.1"/>
</dbReference>
<dbReference type="SMR" id="O77257"/>
<dbReference type="STRING" id="44689.O77257"/>
<dbReference type="GlyCosmos" id="O77257">
    <property type="glycosylation" value="1 site, No reported glycans"/>
</dbReference>
<dbReference type="GlyGen" id="O77257">
    <property type="glycosylation" value="1 site"/>
</dbReference>
<dbReference type="PaxDb" id="44689-DDB0215014"/>
<dbReference type="ABCD" id="O77257">
    <property type="antibodies" value="1 sequenced antibody"/>
</dbReference>
<dbReference type="EnsemblProtists" id="EAL67964">
    <property type="protein sequence ID" value="EAL67964"/>
    <property type="gene ID" value="DDB_G0278725"/>
</dbReference>
<dbReference type="GeneID" id="8621750"/>
<dbReference type="KEGG" id="ddi:DDB_G0278725"/>
<dbReference type="dictyBase" id="DDB_G0278725">
    <property type="gene designation" value="p17"/>
</dbReference>
<dbReference type="VEuPathDB" id="AmoebaDB:DDB_G0278725"/>
<dbReference type="eggNOG" id="ENOG502RHU4">
    <property type="taxonomic scope" value="Eukaryota"/>
</dbReference>
<dbReference type="HOGENOM" id="CLU_1542883_0_0_1"/>
<dbReference type="InParanoid" id="O77257"/>
<dbReference type="OMA" id="HEIVNIF"/>
<dbReference type="PhylomeDB" id="O77257"/>
<dbReference type="PRO" id="PR:O77257"/>
<dbReference type="Proteomes" id="UP000002195">
    <property type="component" value="Chromosome 3"/>
</dbReference>
<dbReference type="GO" id="GO:0005576">
    <property type="term" value="C:extracellular region"/>
    <property type="evidence" value="ECO:0000314"/>
    <property type="project" value="dictyBase"/>
</dbReference>
<dbReference type="GO" id="GO:0042599">
    <property type="term" value="C:lamellar body"/>
    <property type="evidence" value="ECO:0000314"/>
    <property type="project" value="dictyBase"/>
</dbReference>
<dbReference type="GO" id="GO:0032195">
    <property type="term" value="C:post-lysosomal vacuole"/>
    <property type="evidence" value="ECO:0000314"/>
    <property type="project" value="dictyBase"/>
</dbReference>
<dbReference type="CDD" id="cd22935">
    <property type="entry name" value="SctA-like"/>
    <property type="match status" value="1"/>
</dbReference>
<dbReference type="PANTHER" id="PTHR38742">
    <property type="entry name" value="PROTEIN GP17"/>
    <property type="match status" value="1"/>
</dbReference>
<dbReference type="PANTHER" id="PTHR38742:SF5">
    <property type="entry name" value="SECRETED PROTEIN A"/>
    <property type="match status" value="1"/>
</dbReference>